<organism>
    <name type="scientific">Escherichia coli (strain 55989 / EAEC)</name>
    <dbReference type="NCBI Taxonomy" id="585055"/>
    <lineage>
        <taxon>Bacteria</taxon>
        <taxon>Pseudomonadati</taxon>
        <taxon>Pseudomonadota</taxon>
        <taxon>Gammaproteobacteria</taxon>
        <taxon>Enterobacterales</taxon>
        <taxon>Enterobacteriaceae</taxon>
        <taxon>Escherichia</taxon>
    </lineage>
</organism>
<proteinExistence type="inferred from homology"/>
<dbReference type="EMBL" id="CU928145">
    <property type="protein sequence ID" value="CAV01584.1"/>
    <property type="molecule type" value="Genomic_DNA"/>
</dbReference>
<dbReference type="RefSeq" id="WP_000883400.1">
    <property type="nucleotide sequence ID" value="NC_011748.1"/>
</dbReference>
<dbReference type="SMR" id="B7LBZ6"/>
<dbReference type="GeneID" id="93777687"/>
<dbReference type="KEGG" id="eck:EC55989_4692"/>
<dbReference type="HOGENOM" id="CLU_098807_3_0_6"/>
<dbReference type="Proteomes" id="UP000000746">
    <property type="component" value="Chromosome"/>
</dbReference>
<dbReference type="GO" id="GO:0005737">
    <property type="term" value="C:cytoplasm"/>
    <property type="evidence" value="ECO:0007669"/>
    <property type="project" value="UniProtKB-SubCell"/>
</dbReference>
<dbReference type="GO" id="GO:0005507">
    <property type="term" value="F:copper ion binding"/>
    <property type="evidence" value="ECO:0007669"/>
    <property type="project" value="UniProtKB-UniRule"/>
</dbReference>
<dbReference type="GO" id="GO:0010038">
    <property type="term" value="P:response to metal ion"/>
    <property type="evidence" value="ECO:0007669"/>
    <property type="project" value="InterPro"/>
</dbReference>
<dbReference type="FunFam" id="3.30.70.120:FF:000004">
    <property type="entry name" value="Divalent-cation tolerance protein CutA"/>
    <property type="match status" value="1"/>
</dbReference>
<dbReference type="Gene3D" id="3.30.70.120">
    <property type="match status" value="1"/>
</dbReference>
<dbReference type="HAMAP" id="MF_01160">
    <property type="entry name" value="CutA"/>
    <property type="match status" value="1"/>
</dbReference>
<dbReference type="InterPro" id="IPR023700">
    <property type="entry name" value="CutA_Enterobact"/>
</dbReference>
<dbReference type="InterPro" id="IPR004323">
    <property type="entry name" value="Ion_tolerance_CutA"/>
</dbReference>
<dbReference type="InterPro" id="IPR011322">
    <property type="entry name" value="N-reg_PII-like_a/b"/>
</dbReference>
<dbReference type="InterPro" id="IPR015867">
    <property type="entry name" value="N-reg_PII/ATP_PRibTrfase_C"/>
</dbReference>
<dbReference type="NCBIfam" id="NF007930">
    <property type="entry name" value="PRK10645.1"/>
    <property type="match status" value="1"/>
</dbReference>
<dbReference type="PANTHER" id="PTHR23419">
    <property type="entry name" value="DIVALENT CATION TOLERANCE CUTA-RELATED"/>
    <property type="match status" value="1"/>
</dbReference>
<dbReference type="PANTHER" id="PTHR23419:SF8">
    <property type="entry name" value="FI09726P"/>
    <property type="match status" value="1"/>
</dbReference>
<dbReference type="Pfam" id="PF03091">
    <property type="entry name" value="CutA1"/>
    <property type="match status" value="1"/>
</dbReference>
<dbReference type="SUPFAM" id="SSF54913">
    <property type="entry name" value="GlnB-like"/>
    <property type="match status" value="1"/>
</dbReference>
<keyword id="KW-0186">Copper</keyword>
<keyword id="KW-0963">Cytoplasm</keyword>
<keyword id="KW-0479">Metal-binding</keyword>
<keyword id="KW-1185">Reference proteome</keyword>
<name>CUTA_ECO55</name>
<reference key="1">
    <citation type="journal article" date="2009" name="PLoS Genet.">
        <title>Organised genome dynamics in the Escherichia coli species results in highly diverse adaptive paths.</title>
        <authorList>
            <person name="Touchon M."/>
            <person name="Hoede C."/>
            <person name="Tenaillon O."/>
            <person name="Barbe V."/>
            <person name="Baeriswyl S."/>
            <person name="Bidet P."/>
            <person name="Bingen E."/>
            <person name="Bonacorsi S."/>
            <person name="Bouchier C."/>
            <person name="Bouvet O."/>
            <person name="Calteau A."/>
            <person name="Chiapello H."/>
            <person name="Clermont O."/>
            <person name="Cruveiller S."/>
            <person name="Danchin A."/>
            <person name="Diard M."/>
            <person name="Dossat C."/>
            <person name="Karoui M.E."/>
            <person name="Frapy E."/>
            <person name="Garry L."/>
            <person name="Ghigo J.M."/>
            <person name="Gilles A.M."/>
            <person name="Johnson J."/>
            <person name="Le Bouguenec C."/>
            <person name="Lescat M."/>
            <person name="Mangenot S."/>
            <person name="Martinez-Jehanne V."/>
            <person name="Matic I."/>
            <person name="Nassif X."/>
            <person name="Oztas S."/>
            <person name="Petit M.A."/>
            <person name="Pichon C."/>
            <person name="Rouy Z."/>
            <person name="Ruf C.S."/>
            <person name="Schneider D."/>
            <person name="Tourret J."/>
            <person name="Vacherie B."/>
            <person name="Vallenet D."/>
            <person name="Medigue C."/>
            <person name="Rocha E.P.C."/>
            <person name="Denamur E."/>
        </authorList>
    </citation>
    <scope>NUCLEOTIDE SEQUENCE [LARGE SCALE GENOMIC DNA]</scope>
    <source>
        <strain>55989 / EAEC</strain>
    </source>
</reference>
<evidence type="ECO:0000255" key="1">
    <source>
        <dbReference type="HAMAP-Rule" id="MF_01160"/>
    </source>
</evidence>
<comment type="function">
    <text evidence="1">Involved in resistance toward heavy metals.</text>
</comment>
<comment type="cofactor">
    <cofactor evidence="1">
        <name>Cu cation</name>
        <dbReference type="ChEBI" id="CHEBI:23378"/>
    </cofactor>
    <text evidence="1">Binds 1 copper ion per subunit.</text>
</comment>
<comment type="subunit">
    <text evidence="1">Homotrimer.</text>
</comment>
<comment type="subcellular location">
    <subcellularLocation>
        <location evidence="1">Cytoplasm</location>
    </subcellularLocation>
</comment>
<comment type="similarity">
    <text evidence="1">Belongs to the CutA family.</text>
</comment>
<sequence>MLDEKSSNTASVVVLCTAPDEATAQDLAAKVLAEKLAACATLIPGATSLYYWEGKLEQEYEVQMILKTTVSHQQALLECLKSHHPYQTPELLVLPVTHGDTDYLSWLNASLR</sequence>
<feature type="chain" id="PRO_1000164313" description="Divalent-cation tolerance protein CutA">
    <location>
        <begin position="1"/>
        <end position="112"/>
    </location>
</feature>
<feature type="binding site" evidence="1">
    <location>
        <position position="16"/>
    </location>
    <ligand>
        <name>Cu cation</name>
        <dbReference type="ChEBI" id="CHEBI:23378"/>
    </ligand>
</feature>
<feature type="binding site" evidence="1">
    <location>
        <position position="83"/>
    </location>
    <ligand>
        <name>Cu cation</name>
        <dbReference type="ChEBI" id="CHEBI:23378"/>
    </ligand>
</feature>
<feature type="binding site" evidence="1">
    <location>
        <position position="84"/>
    </location>
    <ligand>
        <name>Cu cation</name>
        <dbReference type="ChEBI" id="CHEBI:23378"/>
    </ligand>
</feature>
<protein>
    <recommendedName>
        <fullName evidence="1">Divalent-cation tolerance protein CutA</fullName>
    </recommendedName>
</protein>
<accession>B7LBZ6</accession>
<gene>
    <name evidence="1" type="primary">cutA</name>
    <name type="ordered locus">EC55989_4692</name>
</gene>